<feature type="chain" id="PRO_0000157271" description="Preprotein translocase subunit SecG">
    <location>
        <begin position="1"/>
        <end position="52"/>
    </location>
</feature>
<feature type="topological domain" description="Cytoplasmic" evidence="1">
    <location>
        <begin position="1"/>
        <end position="30"/>
    </location>
</feature>
<feature type="transmembrane region" description="Helical" evidence="1">
    <location>
        <begin position="31"/>
        <end position="50"/>
    </location>
</feature>
<feature type="topological domain" description="Extracellular" evidence="1">
    <location>
        <begin position="51"/>
        <end position="52"/>
    </location>
</feature>
<evidence type="ECO:0000250" key="1"/>
<evidence type="ECO:0000305" key="2"/>
<keyword id="KW-1003">Cell membrane</keyword>
<keyword id="KW-0472">Membrane</keyword>
<keyword id="KW-0653">Protein transport</keyword>
<keyword id="KW-1185">Reference proteome</keyword>
<keyword id="KW-0811">Translocation</keyword>
<keyword id="KW-0812">Transmembrane</keyword>
<keyword id="KW-1133">Transmembrane helix</keyword>
<keyword id="KW-0813">Transport</keyword>
<accession>P60461</accession>
<comment type="function">
    <text evidence="1">Involved in protein export. The function of the beta subunit is unknown, but it may be involved in stabilization of the trimeric complex (By similarity).</text>
</comment>
<comment type="subunit">
    <text evidence="1">Component of the protein translocase complex. Heterotrimer consisting of alpha (SecY), beta (SecG) and gamma (SecE) subunits. Can form oligomers of the heterotrimer (By similarity).</text>
</comment>
<comment type="subcellular location">
    <subcellularLocation>
        <location evidence="1">Cell membrane</location>
        <topology evidence="1">Single-pass membrane protein</topology>
    </subcellularLocation>
</comment>
<comment type="similarity">
    <text evidence="2">Belongs to the SEC61-beta family.</text>
</comment>
<organism>
    <name type="scientific">Methanothermobacter thermautotrophicus (strain ATCC 29096 / DSM 1053 / JCM 10044 / NBRC 100330 / Delta H)</name>
    <name type="common">Methanobacterium thermoautotrophicum</name>
    <dbReference type="NCBI Taxonomy" id="187420"/>
    <lineage>
        <taxon>Archaea</taxon>
        <taxon>Methanobacteriati</taxon>
        <taxon>Methanobacteriota</taxon>
        <taxon>Methanomada group</taxon>
        <taxon>Methanobacteria</taxon>
        <taxon>Methanobacteriales</taxon>
        <taxon>Methanobacteriaceae</taxon>
        <taxon>Methanothermobacter</taxon>
    </lineage>
</organism>
<gene>
    <name type="primary">secG</name>
    <name type="ordered locus">MTH_1536.1</name>
</gene>
<dbReference type="EMBL" id="AE000666">
    <property type="status" value="NOT_ANNOTATED_CDS"/>
    <property type="molecule type" value="Genomic_DNA"/>
</dbReference>
<dbReference type="RefSeq" id="WP_013294958.1">
    <property type="nucleotide sequence ID" value="NC_000916.1"/>
</dbReference>
<dbReference type="SMR" id="P60461"/>
<dbReference type="GeneID" id="92394529"/>
<dbReference type="InParanoid" id="P60461"/>
<dbReference type="Proteomes" id="UP000005223">
    <property type="component" value="Chromosome"/>
</dbReference>
<dbReference type="GO" id="GO:0005886">
    <property type="term" value="C:plasma membrane"/>
    <property type="evidence" value="ECO:0007669"/>
    <property type="project" value="UniProtKB-SubCell"/>
</dbReference>
<dbReference type="GO" id="GO:0015031">
    <property type="term" value="P:protein transport"/>
    <property type="evidence" value="ECO:0007669"/>
    <property type="project" value="UniProtKB-UniRule"/>
</dbReference>
<dbReference type="HAMAP" id="MF_00751">
    <property type="entry name" value="SecG"/>
    <property type="match status" value="1"/>
</dbReference>
<dbReference type="InterPro" id="IPR023531">
    <property type="entry name" value="Preprot_translocase_SecG"/>
</dbReference>
<dbReference type="InterPro" id="IPR016482">
    <property type="entry name" value="SecG/Sec61-beta/Sbh"/>
</dbReference>
<dbReference type="NCBIfam" id="NF002318">
    <property type="entry name" value="PRK01253.1"/>
    <property type="match status" value="1"/>
</dbReference>
<dbReference type="Pfam" id="PF03911">
    <property type="entry name" value="Sec61_beta"/>
    <property type="match status" value="1"/>
</dbReference>
<protein>
    <recommendedName>
        <fullName>Preprotein translocase subunit SecG</fullName>
    </recommendedName>
    <alternativeName>
        <fullName>Protein transport protein Sec61 subunit beta homolog</fullName>
    </alternativeName>
</protein>
<reference key="1">
    <citation type="journal article" date="1997" name="J. Bacteriol.">
        <title>Complete genome sequence of Methanobacterium thermoautotrophicum deltaH: functional analysis and comparative genomics.</title>
        <authorList>
            <person name="Smith D.R."/>
            <person name="Doucette-Stamm L.A."/>
            <person name="Deloughery C."/>
            <person name="Lee H.-M."/>
            <person name="Dubois J."/>
            <person name="Aldredge T."/>
            <person name="Bashirzadeh R."/>
            <person name="Blakely D."/>
            <person name="Cook R."/>
            <person name="Gilbert K."/>
            <person name="Harrison D."/>
            <person name="Hoang L."/>
            <person name="Keagle P."/>
            <person name="Lumm W."/>
            <person name="Pothier B."/>
            <person name="Qiu D."/>
            <person name="Spadafora R."/>
            <person name="Vicare R."/>
            <person name="Wang Y."/>
            <person name="Wierzbowski J."/>
            <person name="Gibson R."/>
            <person name="Jiwani N."/>
            <person name="Caruso A."/>
            <person name="Bush D."/>
            <person name="Safer H."/>
            <person name="Patwell D."/>
            <person name="Prabhakar S."/>
            <person name="McDougall S."/>
            <person name="Shimer G."/>
            <person name="Goyal A."/>
            <person name="Pietrovski S."/>
            <person name="Church G.M."/>
            <person name="Daniels C.J."/>
            <person name="Mao J.-I."/>
            <person name="Rice P."/>
            <person name="Noelling J."/>
            <person name="Reeve J.N."/>
        </authorList>
    </citation>
    <scope>NUCLEOTIDE SEQUENCE [LARGE SCALE GENOMIC DNA]</scope>
    <source>
        <strain>ATCC 29096 / DSM 1053 / JCM 10044 / NBRC 100330 / Delta H</strain>
    </source>
</reference>
<proteinExistence type="inferred from homology"/>
<name>SECG_METTH</name>
<sequence>MAKKDKKTLPPSGAGLVRYFEEETKGPKLTPEQVVVMSIILAVFCLVLRFSG</sequence>